<name>EFG2_VIBVY</name>
<comment type="function">
    <text evidence="1">Catalyzes the GTP-dependent ribosomal translocation step during translation elongation. During this step, the ribosome changes from the pre-translocational (PRE) to the post-translocational (POST) state as the newly formed A-site-bound peptidyl-tRNA and P-site-bound deacylated tRNA move to the P and E sites, respectively. Catalyzes the coordinated movement of the two tRNA molecules, the mRNA and conformational changes in the ribosome.</text>
</comment>
<comment type="subcellular location">
    <subcellularLocation>
        <location evidence="1">Cytoplasm</location>
    </subcellularLocation>
</comment>
<comment type="similarity">
    <text evidence="1">Belongs to the TRAFAC class translation factor GTPase superfamily. Classic translation factor GTPase family. EF-G/EF-2 subfamily.</text>
</comment>
<keyword id="KW-0963">Cytoplasm</keyword>
<keyword id="KW-0251">Elongation factor</keyword>
<keyword id="KW-0342">GTP-binding</keyword>
<keyword id="KW-0547">Nucleotide-binding</keyword>
<keyword id="KW-0648">Protein biosynthesis</keyword>
<sequence length="695" mass="76514">MADLSKYRNIGIFAHVDAGKTTTTERILKLTGKIHRLGEVHDGASTMDFMDQEAERGITIQSAATTCFWKDHRFNVIDTPGHVDFTVEVYRSLKVLDGGIGVFCGSGGVEPQSETNWRYANESEVSRLIFVNKLDRMGADFFRVVEQVKKVLGANPLVMTLPIGREDEFVGVVDVLTRQAFVWDDSGLPENYEIKEIPADMVDQVEEYREMMIESAVEQDDELMMAYMEGEEPSIEQIKACIRKGTRDLAFFPTYCGSAFKNKGMQLVLDAVVDYLPSPTEVEPQPLTNPETGEPTGEVATVSVDAPLKALAFKIMDDRFGALTFIRIYSGRLKKGDTVLNSATGKTERIGRMVEMHANDRNELEAAQAGDIIAVVGMKNVQTGHTLCDPKHECTLEPMIFPEPVISIAVKPKDKNGSEKMGIAIGKMVAEDPSFQVETDEDSGETILKGMGELHLDIKVDILKRTYGVELEVGAPQVAYRETITKAVEDSYTHKKQSGGSGQFGKIDYRIKPGEPNSGFTFKSTVVGGNVPKEFWPAVEKGFEGMMQNGVLAGFPTLDVEVELFDGGFHAVDSSAIAFEIAAKGAFRQSMPKAGPQLLEPIMKVDVFTPEDHVGDVIGDLNRRRGMIKNQEMGATGVRVKADVPLSEMFGYIGTLRTMTSGRGQFSMEFSHYSACPSNVAEQVIAEVKERNAKK</sequence>
<gene>
    <name evidence="1" type="primary">fusA2</name>
    <name type="ordered locus">VV2668</name>
</gene>
<organism>
    <name type="scientific">Vibrio vulnificus (strain YJ016)</name>
    <dbReference type="NCBI Taxonomy" id="196600"/>
    <lineage>
        <taxon>Bacteria</taxon>
        <taxon>Pseudomonadati</taxon>
        <taxon>Pseudomonadota</taxon>
        <taxon>Gammaproteobacteria</taxon>
        <taxon>Vibrionales</taxon>
        <taxon>Vibrionaceae</taxon>
        <taxon>Vibrio</taxon>
    </lineage>
</organism>
<accession>Q7MI49</accession>
<proteinExistence type="inferred from homology"/>
<dbReference type="EMBL" id="BA000037">
    <property type="protein sequence ID" value="BAC95432.1"/>
    <property type="molecule type" value="Genomic_DNA"/>
</dbReference>
<dbReference type="SMR" id="Q7MI49"/>
<dbReference type="STRING" id="672.VV93_v1c23890"/>
<dbReference type="KEGG" id="vvy:VV2668"/>
<dbReference type="eggNOG" id="COG0480">
    <property type="taxonomic scope" value="Bacteria"/>
</dbReference>
<dbReference type="HOGENOM" id="CLU_002794_4_1_6"/>
<dbReference type="Proteomes" id="UP000002675">
    <property type="component" value="Chromosome I"/>
</dbReference>
<dbReference type="GO" id="GO:0005737">
    <property type="term" value="C:cytoplasm"/>
    <property type="evidence" value="ECO:0007669"/>
    <property type="project" value="UniProtKB-SubCell"/>
</dbReference>
<dbReference type="GO" id="GO:0005525">
    <property type="term" value="F:GTP binding"/>
    <property type="evidence" value="ECO:0007669"/>
    <property type="project" value="UniProtKB-UniRule"/>
</dbReference>
<dbReference type="GO" id="GO:0003924">
    <property type="term" value="F:GTPase activity"/>
    <property type="evidence" value="ECO:0007669"/>
    <property type="project" value="InterPro"/>
</dbReference>
<dbReference type="GO" id="GO:0097216">
    <property type="term" value="F:guanosine tetraphosphate binding"/>
    <property type="evidence" value="ECO:0007669"/>
    <property type="project" value="UniProtKB-ARBA"/>
</dbReference>
<dbReference type="GO" id="GO:0003746">
    <property type="term" value="F:translation elongation factor activity"/>
    <property type="evidence" value="ECO:0007669"/>
    <property type="project" value="UniProtKB-UniRule"/>
</dbReference>
<dbReference type="GO" id="GO:0032790">
    <property type="term" value="P:ribosome disassembly"/>
    <property type="evidence" value="ECO:0007669"/>
    <property type="project" value="TreeGrafter"/>
</dbReference>
<dbReference type="CDD" id="cd01886">
    <property type="entry name" value="EF-G"/>
    <property type="match status" value="1"/>
</dbReference>
<dbReference type="CDD" id="cd16262">
    <property type="entry name" value="EFG_III"/>
    <property type="match status" value="1"/>
</dbReference>
<dbReference type="CDD" id="cd01434">
    <property type="entry name" value="EFG_mtEFG1_IV"/>
    <property type="match status" value="1"/>
</dbReference>
<dbReference type="CDD" id="cd03713">
    <property type="entry name" value="EFG_mtEFG_C"/>
    <property type="match status" value="1"/>
</dbReference>
<dbReference type="CDD" id="cd04088">
    <property type="entry name" value="EFG_mtEFG_II"/>
    <property type="match status" value="1"/>
</dbReference>
<dbReference type="FunFam" id="2.40.30.10:FF:000006">
    <property type="entry name" value="Elongation factor G"/>
    <property type="match status" value="1"/>
</dbReference>
<dbReference type="FunFam" id="3.30.230.10:FF:000003">
    <property type="entry name" value="Elongation factor G"/>
    <property type="match status" value="1"/>
</dbReference>
<dbReference type="FunFam" id="3.30.70.240:FF:000001">
    <property type="entry name" value="Elongation factor G"/>
    <property type="match status" value="1"/>
</dbReference>
<dbReference type="FunFam" id="3.30.70.870:FF:000006">
    <property type="entry name" value="Elongation factor G"/>
    <property type="match status" value="1"/>
</dbReference>
<dbReference type="FunFam" id="3.40.50.300:FF:000029">
    <property type="entry name" value="Elongation factor G"/>
    <property type="match status" value="1"/>
</dbReference>
<dbReference type="Gene3D" id="3.30.230.10">
    <property type="match status" value="1"/>
</dbReference>
<dbReference type="Gene3D" id="3.30.70.240">
    <property type="match status" value="1"/>
</dbReference>
<dbReference type="Gene3D" id="3.30.70.870">
    <property type="entry name" value="Elongation Factor G (Translational Gtpase), domain 3"/>
    <property type="match status" value="1"/>
</dbReference>
<dbReference type="Gene3D" id="3.40.50.300">
    <property type="entry name" value="P-loop containing nucleotide triphosphate hydrolases"/>
    <property type="match status" value="1"/>
</dbReference>
<dbReference type="Gene3D" id="2.40.30.10">
    <property type="entry name" value="Translation factors"/>
    <property type="match status" value="1"/>
</dbReference>
<dbReference type="HAMAP" id="MF_00054_B">
    <property type="entry name" value="EF_G_EF_2_B"/>
    <property type="match status" value="1"/>
</dbReference>
<dbReference type="InterPro" id="IPR041095">
    <property type="entry name" value="EFG_II"/>
</dbReference>
<dbReference type="InterPro" id="IPR009022">
    <property type="entry name" value="EFG_III"/>
</dbReference>
<dbReference type="InterPro" id="IPR035647">
    <property type="entry name" value="EFG_III/V"/>
</dbReference>
<dbReference type="InterPro" id="IPR047872">
    <property type="entry name" value="EFG_IV"/>
</dbReference>
<dbReference type="InterPro" id="IPR035649">
    <property type="entry name" value="EFG_V"/>
</dbReference>
<dbReference type="InterPro" id="IPR000640">
    <property type="entry name" value="EFG_V-like"/>
</dbReference>
<dbReference type="InterPro" id="IPR004161">
    <property type="entry name" value="EFTu-like_2"/>
</dbReference>
<dbReference type="InterPro" id="IPR031157">
    <property type="entry name" value="G_TR_CS"/>
</dbReference>
<dbReference type="InterPro" id="IPR027417">
    <property type="entry name" value="P-loop_NTPase"/>
</dbReference>
<dbReference type="InterPro" id="IPR020568">
    <property type="entry name" value="Ribosomal_Su5_D2-typ_SF"/>
</dbReference>
<dbReference type="InterPro" id="IPR014721">
    <property type="entry name" value="Ribsml_uS5_D2-typ_fold_subgr"/>
</dbReference>
<dbReference type="InterPro" id="IPR005225">
    <property type="entry name" value="Small_GTP-bd"/>
</dbReference>
<dbReference type="InterPro" id="IPR000795">
    <property type="entry name" value="T_Tr_GTP-bd_dom"/>
</dbReference>
<dbReference type="InterPro" id="IPR009000">
    <property type="entry name" value="Transl_B-barrel_sf"/>
</dbReference>
<dbReference type="InterPro" id="IPR004540">
    <property type="entry name" value="Transl_elong_EFG/EF2"/>
</dbReference>
<dbReference type="InterPro" id="IPR005517">
    <property type="entry name" value="Transl_elong_EFG/EF2_IV"/>
</dbReference>
<dbReference type="NCBIfam" id="TIGR00484">
    <property type="entry name" value="EF-G"/>
    <property type="match status" value="1"/>
</dbReference>
<dbReference type="NCBIfam" id="NF009381">
    <property type="entry name" value="PRK12740.1-5"/>
    <property type="match status" value="1"/>
</dbReference>
<dbReference type="NCBIfam" id="TIGR00231">
    <property type="entry name" value="small_GTP"/>
    <property type="match status" value="1"/>
</dbReference>
<dbReference type="PANTHER" id="PTHR43261:SF5">
    <property type="entry name" value="ELONGATION FACTOR G 1"/>
    <property type="match status" value="1"/>
</dbReference>
<dbReference type="PANTHER" id="PTHR43261">
    <property type="entry name" value="TRANSLATION ELONGATION FACTOR G-RELATED"/>
    <property type="match status" value="1"/>
</dbReference>
<dbReference type="Pfam" id="PF00679">
    <property type="entry name" value="EFG_C"/>
    <property type="match status" value="1"/>
</dbReference>
<dbReference type="Pfam" id="PF14492">
    <property type="entry name" value="EFG_III"/>
    <property type="match status" value="1"/>
</dbReference>
<dbReference type="Pfam" id="PF03764">
    <property type="entry name" value="EFG_IV"/>
    <property type="match status" value="1"/>
</dbReference>
<dbReference type="Pfam" id="PF00009">
    <property type="entry name" value="GTP_EFTU"/>
    <property type="match status" value="1"/>
</dbReference>
<dbReference type="Pfam" id="PF03144">
    <property type="entry name" value="GTP_EFTU_D2"/>
    <property type="match status" value="1"/>
</dbReference>
<dbReference type="PRINTS" id="PR00315">
    <property type="entry name" value="ELONGATNFCT"/>
</dbReference>
<dbReference type="SMART" id="SM00838">
    <property type="entry name" value="EFG_C"/>
    <property type="match status" value="1"/>
</dbReference>
<dbReference type="SMART" id="SM00889">
    <property type="entry name" value="EFG_IV"/>
    <property type="match status" value="1"/>
</dbReference>
<dbReference type="SUPFAM" id="SSF54980">
    <property type="entry name" value="EF-G C-terminal domain-like"/>
    <property type="match status" value="2"/>
</dbReference>
<dbReference type="SUPFAM" id="SSF52540">
    <property type="entry name" value="P-loop containing nucleoside triphosphate hydrolases"/>
    <property type="match status" value="1"/>
</dbReference>
<dbReference type="SUPFAM" id="SSF54211">
    <property type="entry name" value="Ribosomal protein S5 domain 2-like"/>
    <property type="match status" value="1"/>
</dbReference>
<dbReference type="SUPFAM" id="SSF50447">
    <property type="entry name" value="Translation proteins"/>
    <property type="match status" value="1"/>
</dbReference>
<dbReference type="PROSITE" id="PS00301">
    <property type="entry name" value="G_TR_1"/>
    <property type="match status" value="1"/>
</dbReference>
<dbReference type="PROSITE" id="PS51722">
    <property type="entry name" value="G_TR_2"/>
    <property type="match status" value="1"/>
</dbReference>
<protein>
    <recommendedName>
        <fullName evidence="1">Elongation factor G 2</fullName>
        <shortName evidence="1">EF-G 2</shortName>
    </recommendedName>
</protein>
<feature type="chain" id="PRO_0000091265" description="Elongation factor G 2">
    <location>
        <begin position="1"/>
        <end position="695"/>
    </location>
</feature>
<feature type="domain" description="tr-type G">
    <location>
        <begin position="5"/>
        <end position="280"/>
    </location>
</feature>
<feature type="binding site" evidence="1">
    <location>
        <begin position="14"/>
        <end position="21"/>
    </location>
    <ligand>
        <name>GTP</name>
        <dbReference type="ChEBI" id="CHEBI:37565"/>
    </ligand>
</feature>
<feature type="binding site" evidence="1">
    <location>
        <begin position="78"/>
        <end position="82"/>
    </location>
    <ligand>
        <name>GTP</name>
        <dbReference type="ChEBI" id="CHEBI:37565"/>
    </ligand>
</feature>
<feature type="binding site" evidence="1">
    <location>
        <begin position="132"/>
        <end position="135"/>
    </location>
    <ligand>
        <name>GTP</name>
        <dbReference type="ChEBI" id="CHEBI:37565"/>
    </ligand>
</feature>
<reference key="1">
    <citation type="journal article" date="2003" name="Genome Res.">
        <title>Comparative genome analysis of Vibrio vulnificus, a marine pathogen.</title>
        <authorList>
            <person name="Chen C.-Y."/>
            <person name="Wu K.-M."/>
            <person name="Chang Y.-C."/>
            <person name="Chang C.-H."/>
            <person name="Tsai H.-C."/>
            <person name="Liao T.-L."/>
            <person name="Liu Y.-M."/>
            <person name="Chen H.-J."/>
            <person name="Shen A.B.-T."/>
            <person name="Li J.-C."/>
            <person name="Su T.-L."/>
            <person name="Shao C.-P."/>
            <person name="Lee C.-T."/>
            <person name="Hor L.-I."/>
            <person name="Tsai S.-F."/>
        </authorList>
    </citation>
    <scope>NUCLEOTIDE SEQUENCE [LARGE SCALE GENOMIC DNA]</scope>
    <source>
        <strain>YJ016</strain>
    </source>
</reference>
<evidence type="ECO:0000255" key="1">
    <source>
        <dbReference type="HAMAP-Rule" id="MF_00054"/>
    </source>
</evidence>